<feature type="chain" id="PRO_0000285924" description="LHFPL tetraspan subfamily member 5 protein">
    <location>
        <begin position="1"/>
        <end position="219"/>
    </location>
</feature>
<feature type="topological domain" description="Cytoplasmic" evidence="4">
    <location>
        <begin position="1"/>
        <end position="24"/>
    </location>
</feature>
<feature type="transmembrane region" description="Helical" evidence="4">
    <location>
        <begin position="25"/>
        <end position="45"/>
    </location>
</feature>
<feature type="topological domain" description="Extracellular" evidence="4">
    <location>
        <begin position="46"/>
        <end position="98"/>
    </location>
</feature>
<feature type="transmembrane region" description="Helical" evidence="4">
    <location>
        <begin position="99"/>
        <end position="119"/>
    </location>
</feature>
<feature type="topological domain" description="Cytoplasmic" evidence="4">
    <location>
        <begin position="120"/>
        <end position="128"/>
    </location>
</feature>
<feature type="transmembrane region" description="Helical" evidence="4">
    <location>
        <begin position="129"/>
        <end position="149"/>
    </location>
</feature>
<feature type="topological domain" description="Extracellular" evidence="4">
    <location>
        <begin position="150"/>
        <end position="178"/>
    </location>
</feature>
<feature type="transmembrane region" description="Helical" evidence="4">
    <location>
        <begin position="179"/>
        <end position="199"/>
    </location>
</feature>
<feature type="topological domain" description="Cytoplasmic" evidence="4">
    <location>
        <begin position="200"/>
        <end position="219"/>
    </location>
</feature>
<evidence type="ECO:0000250" key="1"/>
<evidence type="ECO:0000250" key="2">
    <source>
        <dbReference type="UniProtKB" id="Q4KL25"/>
    </source>
</evidence>
<evidence type="ECO:0000250" key="3">
    <source>
        <dbReference type="UniProtKB" id="Q8TAF8"/>
    </source>
</evidence>
<evidence type="ECO:0000255" key="4"/>
<evidence type="ECO:0000305" key="5"/>
<evidence type="ECO:0000312" key="6">
    <source>
        <dbReference type="RGD" id="1359370"/>
    </source>
</evidence>
<keyword id="KW-1003">Cell membrane</keyword>
<keyword id="KW-0406">Ion transport</keyword>
<keyword id="KW-0472">Membrane</keyword>
<keyword id="KW-1185">Reference proteome</keyword>
<keyword id="KW-0812">Transmembrane</keyword>
<keyword id="KW-1133">Transmembrane helix</keyword>
<keyword id="KW-0813">Transport</keyword>
<comment type="function">
    <text evidence="2">Auxiliary subunit of the mechanotransducer (MET) non-specific cation channel complex located at the tips of the shorter stereocilia of cochlear hair cells and that mediates sensory transduction in the auditory system. The MET complex is composed of two dimeric pore-forming ion-conducting transmembrane TMC (TMC1 or TMC2) subunits, and aided by several auxiliary proteins including LHFPL5, TMIE, CIB2/3 and TOMT, and the tip-link PCDH15. Functionally couples PCDH15 to the transduction channel.</text>
</comment>
<comment type="subunit">
    <text evidence="2">Forms the MET channel composed of TMC (TMC1 or TMC2), TMIE, TOMT, CIB (CIB2 or CIB3), LHPL5 and PCDH15. Interaction with PCDH15 is required for efficient localization to hair bundles.</text>
</comment>
<comment type="subcellular location">
    <subcellularLocation>
        <location evidence="2">Cell membrane</location>
        <topology evidence="1">Multi-pass membrane protein</topology>
    </subcellularLocation>
    <text evidence="2">Efficient localization to the plasma membrane requires the presence of PCDH15.</text>
</comment>
<comment type="similarity">
    <text evidence="5">Belongs to the LHFP family.</text>
</comment>
<organism>
    <name type="scientific">Rattus norvegicus</name>
    <name type="common">Rat</name>
    <dbReference type="NCBI Taxonomy" id="10116"/>
    <lineage>
        <taxon>Eukaryota</taxon>
        <taxon>Metazoa</taxon>
        <taxon>Chordata</taxon>
        <taxon>Craniata</taxon>
        <taxon>Vertebrata</taxon>
        <taxon>Euteleostomi</taxon>
        <taxon>Mammalia</taxon>
        <taxon>Eutheria</taxon>
        <taxon>Euarchontoglires</taxon>
        <taxon>Glires</taxon>
        <taxon>Rodentia</taxon>
        <taxon>Myomorpha</taxon>
        <taxon>Muroidea</taxon>
        <taxon>Muridae</taxon>
        <taxon>Murinae</taxon>
        <taxon>Rattus</taxon>
    </lineage>
</organism>
<proteinExistence type="evidence at transcript level"/>
<reference key="1">
    <citation type="journal article" date="2004" name="Genome Res.">
        <title>The status, quality, and expansion of the NIH full-length cDNA project: the Mammalian Gene Collection (MGC).</title>
        <authorList>
            <consortium name="The MGC Project Team"/>
        </authorList>
    </citation>
    <scope>NUCLEOTIDE SEQUENCE [LARGE SCALE MRNA]</scope>
    <source>
        <tissue>Brain</tissue>
    </source>
</reference>
<accession>Q5PPI7</accession>
<sequence length="219" mass="24186">MVKLLPAQEAAKIYHTNYVRNSRAVGVMWGTLTICFSVLVMALFIQPYWIGDSVSTPQAGYFGLFSYCVGNVLSSELICKGGPLDFSSIPSRAFKTAMFFVALAMFLIIGSIICFSLFFVCNTATVYKICAWMQLAAATGLMIGCLVYPDGWDSSEVRRMCGEQTGKYTLGHCTIRWAFMLAILSIGDALILSFLAFVLGYRQDKLLPDDYKADGNEEV</sequence>
<gene>
    <name evidence="6" type="primary">Lhfpl5</name>
    <name evidence="2" type="synonym">Tmhs</name>
</gene>
<protein>
    <recommendedName>
        <fullName evidence="6">LHFPL tetraspan subfamily member 5 protein</fullName>
    </recommendedName>
    <alternativeName>
        <fullName evidence="3">Lipoma HMGIC fusion partner-like 5 protein</fullName>
    </alternativeName>
    <alternativeName>
        <fullName evidence="2">Tetraspan membrane protein of hair cell stereocilia</fullName>
    </alternativeName>
</protein>
<name>LHPL5_RAT</name>
<dbReference type="EMBL" id="BC087673">
    <property type="protein sequence ID" value="AAH87673.1"/>
    <property type="molecule type" value="mRNA"/>
</dbReference>
<dbReference type="RefSeq" id="NP_001013928.1">
    <property type="nucleotide sequence ID" value="NM_001013906.2"/>
</dbReference>
<dbReference type="SMR" id="Q5PPI7"/>
<dbReference type="FunCoup" id="Q5PPI7">
    <property type="interactions" value="164"/>
</dbReference>
<dbReference type="STRING" id="10116.ENSRNOP00000030852"/>
<dbReference type="PaxDb" id="10116-ENSRNOP00000030852"/>
<dbReference type="Ensembl" id="ENSRNOT00000036999.7">
    <property type="protein sequence ID" value="ENSRNOP00000030852.4"/>
    <property type="gene ID" value="ENSRNOG00000022283.7"/>
</dbReference>
<dbReference type="GeneID" id="294303"/>
<dbReference type="KEGG" id="rno:294303"/>
<dbReference type="UCSC" id="RGD:1359370">
    <property type="organism name" value="rat"/>
</dbReference>
<dbReference type="AGR" id="RGD:1359370"/>
<dbReference type="CTD" id="222662"/>
<dbReference type="RGD" id="1359370">
    <property type="gene designation" value="Lhfpl5"/>
</dbReference>
<dbReference type="eggNOG" id="KOG4026">
    <property type="taxonomic scope" value="Eukaryota"/>
</dbReference>
<dbReference type="GeneTree" id="ENSGT00990000203541"/>
<dbReference type="HOGENOM" id="CLU_084868_1_2_1"/>
<dbReference type="InParanoid" id="Q5PPI7"/>
<dbReference type="OMA" id="SMVVFIQ"/>
<dbReference type="OrthoDB" id="5873721at2759"/>
<dbReference type="PhylomeDB" id="Q5PPI7"/>
<dbReference type="TreeFam" id="TF321143"/>
<dbReference type="PRO" id="PR:Q5PPI7"/>
<dbReference type="Proteomes" id="UP000002494">
    <property type="component" value="Chromosome 20"/>
</dbReference>
<dbReference type="Bgee" id="ENSRNOG00000022283">
    <property type="expression patterns" value="Expressed in cerebellum and 7 other cell types or tissues"/>
</dbReference>
<dbReference type="GO" id="GO:0016324">
    <property type="term" value="C:apical plasma membrane"/>
    <property type="evidence" value="ECO:0000266"/>
    <property type="project" value="RGD"/>
</dbReference>
<dbReference type="GO" id="GO:0005886">
    <property type="term" value="C:plasma membrane"/>
    <property type="evidence" value="ECO:0000266"/>
    <property type="project" value="RGD"/>
</dbReference>
<dbReference type="GO" id="GO:0032421">
    <property type="term" value="C:stereocilium bundle"/>
    <property type="evidence" value="ECO:0000266"/>
    <property type="project" value="RGD"/>
</dbReference>
<dbReference type="GO" id="GO:0032426">
    <property type="term" value="C:stereocilium tip"/>
    <property type="evidence" value="ECO:0000266"/>
    <property type="project" value="RGD"/>
</dbReference>
<dbReference type="GO" id="GO:0060088">
    <property type="term" value="P:auditory receptor cell stereocilium organization"/>
    <property type="evidence" value="ECO:0000266"/>
    <property type="project" value="RGD"/>
</dbReference>
<dbReference type="GO" id="GO:0050974">
    <property type="term" value="P:detection of mechanical stimulus involved in sensory perception"/>
    <property type="evidence" value="ECO:0000318"/>
    <property type="project" value="GO_Central"/>
</dbReference>
<dbReference type="GO" id="GO:0050910">
    <property type="term" value="P:detection of mechanical stimulus involved in sensory perception of sound"/>
    <property type="evidence" value="ECO:0000266"/>
    <property type="project" value="RGD"/>
</dbReference>
<dbReference type="GO" id="GO:0006811">
    <property type="term" value="P:monoatomic ion transport"/>
    <property type="evidence" value="ECO:0007669"/>
    <property type="project" value="UniProtKB-KW"/>
</dbReference>
<dbReference type="GO" id="GO:0007605">
    <property type="term" value="P:sensory perception of sound"/>
    <property type="evidence" value="ECO:0000266"/>
    <property type="project" value="RGD"/>
</dbReference>
<dbReference type="InterPro" id="IPR019372">
    <property type="entry name" value="LHFPL"/>
</dbReference>
<dbReference type="PANTHER" id="PTHR12489:SF18">
    <property type="entry name" value="LHFPL TETRASPAN SUBFAMILY MEMBER 5 PROTEIN"/>
    <property type="match status" value="1"/>
</dbReference>
<dbReference type="PANTHER" id="PTHR12489">
    <property type="entry name" value="LIPOMA HMGIC FUSION PARTNER-LIKE PROTEIN"/>
    <property type="match status" value="1"/>
</dbReference>
<dbReference type="Pfam" id="PF10242">
    <property type="entry name" value="L_HMGIC_fpl"/>
    <property type="match status" value="1"/>
</dbReference>